<keyword id="KW-0256">Endoplasmic reticulum</keyword>
<keyword id="KW-0444">Lipid biosynthesis</keyword>
<keyword id="KW-0443">Lipid metabolism</keyword>
<keyword id="KW-0472">Membrane</keyword>
<keyword id="KW-0489">Methyltransferase</keyword>
<keyword id="KW-0594">Phospholipid biosynthesis</keyword>
<keyword id="KW-1208">Phospholipid metabolism</keyword>
<keyword id="KW-1185">Reference proteome</keyword>
<keyword id="KW-0949">S-adenosyl-L-methionine</keyword>
<keyword id="KW-0808">Transferase</keyword>
<keyword id="KW-0812">Transmembrane</keyword>
<keyword id="KW-1133">Transmembrane helix</keyword>
<feature type="chain" id="PRO_0000405918" description="Phosphatidylethanolamine N-methyltransferase">
    <location>
        <begin position="1"/>
        <end position="963"/>
    </location>
</feature>
<feature type="topological domain" description="Lumenal" evidence="1">
    <location>
        <begin position="1"/>
        <end position="85"/>
    </location>
</feature>
<feature type="transmembrane region" description="Helical" evidence="1">
    <location>
        <begin position="86"/>
        <end position="106"/>
    </location>
</feature>
<feature type="topological domain" description="Cytoplasmic" evidence="1">
    <location>
        <begin position="107"/>
        <end position="109"/>
    </location>
</feature>
<feature type="transmembrane region" description="Helical" evidence="1">
    <location>
        <begin position="110"/>
        <end position="130"/>
    </location>
</feature>
<feature type="topological domain" description="Lumenal" evidence="1">
    <location>
        <begin position="131"/>
        <end position="195"/>
    </location>
</feature>
<feature type="transmembrane region" description="Helical" evidence="1">
    <location>
        <begin position="196"/>
        <end position="216"/>
    </location>
</feature>
<feature type="topological domain" description="Cytoplasmic" evidence="1">
    <location>
        <begin position="217"/>
        <end position="223"/>
    </location>
</feature>
<feature type="transmembrane region" description="Helical" evidence="1">
    <location>
        <begin position="224"/>
        <end position="244"/>
    </location>
</feature>
<feature type="topological domain" description="Lumenal" evidence="1">
    <location>
        <begin position="245"/>
        <end position="273"/>
    </location>
</feature>
<feature type="transmembrane region" description="Helical" evidence="1">
    <location>
        <begin position="274"/>
        <end position="294"/>
    </location>
</feature>
<feature type="topological domain" description="Cytoplasmic" evidence="1">
    <location>
        <begin position="295"/>
        <end position="300"/>
    </location>
</feature>
<feature type="transmembrane region" description="Helical" evidence="1">
    <location>
        <begin position="301"/>
        <end position="321"/>
    </location>
</feature>
<feature type="topological domain" description="Lumenal" evidence="1">
    <location>
        <begin position="322"/>
        <end position="384"/>
    </location>
</feature>
<feature type="transmembrane region" description="Helical" evidence="1">
    <location>
        <begin position="385"/>
        <end position="405"/>
    </location>
</feature>
<feature type="topological domain" description="Cytoplasmic" evidence="1">
    <location>
        <begin position="406"/>
        <end position="412"/>
    </location>
</feature>
<feature type="transmembrane region" description="Helical" evidence="1">
    <location>
        <begin position="413"/>
        <end position="433"/>
    </location>
</feature>
<feature type="topological domain" description="Lumenal" evidence="1">
    <location>
        <begin position="434"/>
        <end position="462"/>
    </location>
</feature>
<feature type="transmembrane region" description="Helical" evidence="1">
    <location>
        <begin position="463"/>
        <end position="483"/>
    </location>
</feature>
<feature type="topological domain" description="Cytoplasmic" evidence="1">
    <location>
        <begin position="484"/>
        <end position="491"/>
    </location>
</feature>
<feature type="transmembrane region" description="Helical" evidence="1">
    <location>
        <begin position="492"/>
        <end position="512"/>
    </location>
</feature>
<feature type="topological domain" description="Lumenal" evidence="1">
    <location>
        <begin position="513"/>
        <end position="568"/>
    </location>
</feature>
<feature type="transmembrane region" description="Helical" evidence="1">
    <location>
        <begin position="569"/>
        <end position="589"/>
    </location>
</feature>
<feature type="topological domain" description="Cytoplasmic" evidence="1">
    <location>
        <begin position="590"/>
        <end position="963"/>
    </location>
</feature>
<feature type="region of interest" description="Disordered" evidence="2">
    <location>
        <begin position="1"/>
        <end position="32"/>
    </location>
</feature>
<organism>
    <name type="scientific">Sordaria macrospora (strain ATCC MYA-333 / DSM 997 / K(L3346) / K-hell)</name>
    <dbReference type="NCBI Taxonomy" id="771870"/>
    <lineage>
        <taxon>Eukaryota</taxon>
        <taxon>Fungi</taxon>
        <taxon>Dikarya</taxon>
        <taxon>Ascomycota</taxon>
        <taxon>Pezizomycotina</taxon>
        <taxon>Sordariomycetes</taxon>
        <taxon>Sordariomycetidae</taxon>
        <taxon>Sordariales</taxon>
        <taxon>Sordariaceae</taxon>
        <taxon>Sordaria</taxon>
    </lineage>
</organism>
<reference key="1">
    <citation type="journal article" date="2010" name="PLoS Genet.">
        <title>De novo assembly of a 40 Mb eukaryotic genome from short sequence reads: Sordaria macrospora, a model organism for fungal morphogenesis.</title>
        <authorList>
            <person name="Nowrousian M."/>
            <person name="Stajich J.E."/>
            <person name="Chu M."/>
            <person name="Engh I."/>
            <person name="Espagne E."/>
            <person name="Halliday K."/>
            <person name="Kamerewerd J."/>
            <person name="Kempken F."/>
            <person name="Knab B."/>
            <person name="Kuo H.-C."/>
            <person name="Osiewacz H.D."/>
            <person name="Poeggeler S."/>
            <person name="Read N.D."/>
            <person name="Seiler S."/>
            <person name="Smith K.M."/>
            <person name="Zickler D."/>
            <person name="Kueck U."/>
            <person name="Freitag M."/>
        </authorList>
    </citation>
    <scope>NUCLEOTIDE SEQUENCE [LARGE SCALE GENOMIC DNA]</scope>
    <source>
        <strain>ATCC MYA-333 / DSM 997 / K(L3346) / K-hell</strain>
    </source>
</reference>
<protein>
    <recommendedName>
        <fullName evidence="1">Phosphatidylethanolamine N-methyltransferase</fullName>
        <shortName evidence="1">PE methyltransferase</shortName>
        <shortName evidence="1">PEAMT</shortName>
        <shortName evidence="1">PEMT</shortName>
        <ecNumber evidence="1">2.1.1.17</ecNumber>
    </recommendedName>
</protein>
<name>CHO2_SORMK</name>
<sequence length="963" mass="108806">MSSSAADPSAARLNSDVRQRHPTASAASEDVEDALLQQQKEADAAASRAKKTYGKTPDGTVFVVPTTHDMVTQLLDPREPKNLSDVAVLAIIALHFLAAYYLPWGVKRPLFAAIFMFWRLAYNVGIGYLLTIQSKYKLLVTWAKRWKLFENPATGKNPRPWLYNLLKKELETKIPQDYKFEEAPIEYNTWLTFRRVVDLILMCDFISYCLFAIVCAHKPDGEGFFVGFARWVVGITLVGFNLWVKLDAHRVVKDYAWYWGDFFYLIEQELTFDGVFELAPHPMYSIGYAGYYGISMMAASYDVLFISIIAHAAQFAFLVVVENPHIEKTYNPPQPRVRSESEAGSQLQEVASEYSVPSTSGRHNDNSPQPVHNLIGLKNLDFFRITDVAVVLLSAYLAVVTMVTPNTRFYQALFVLHALAWRVWYSFGLGVILTMQSEEKMFTRHFLKYGESLGEAWRQWKGIYHLSNCLCHASFIAACYKMYEFPAGGDNGWALLKHVVGLGLIALQVWTATSIYESLGEFGWFYGDFFFDSKRQLTYTSIYRFLNNPERVFGTAGLWGAALITWSRAIFLMALAGHFLTLAFLAYVEKPHMQKVYGRNLRDDAGVTKFIKRSLPPPVTEWQQSIDKVLDETKHFIDEFVEAARSRLATGSSTIVKDTSALFNKYPARLTISKISADLAGYDPKHYGLSLAGTPVVGTNEKATGKESPNARVLKDVKTQSFEYGAPIRVKWTAPAKHSKKDWIGLYMVTDNRSREVTEVPSLGRWVPTNPGEYDTTTDQGILVWDQPVEKKSEDTDLVEGEMIFEGDKLWWTQGVFEFRYHHGGGHHVMSISEPFEIQIPKFDDEHRGVDISAGSGEVGERAVEAALLPVIRNCLDRDPDIAPSNADERFGGHVERDGKYARRVVYAIRHMFGIDFAPAVVLADGNVRRLAWRICHAKEVLAPFSMSHTNGRTTPVDSKFSE</sequence>
<accession>D1ZIW5</accession>
<accession>F7VZY2</accession>
<gene>
    <name type="primary">CHO2</name>
    <name type="ORF">SMAC_03788</name>
</gene>
<proteinExistence type="inferred from homology"/>
<comment type="function">
    <text evidence="1">Catalyzes the first step of the methylation pathway of phosphatidylcholine biosynthesis, the SAM-dependent methylation of phosphatidylethanolamine (PE) to phosphatidylmonomethylethanolamine (PMME).</text>
</comment>
<comment type="catalytic activity">
    <reaction evidence="1">
        <text>a 1,2-diacyl-sn-glycero-3-phosphoethanolamine + S-adenosyl-L-methionine = a 1,2-diacyl-sn-glycero-3-phospho-N-methylethanolamine + S-adenosyl-L-homocysteine + H(+)</text>
        <dbReference type="Rhea" id="RHEA:11164"/>
        <dbReference type="ChEBI" id="CHEBI:15378"/>
        <dbReference type="ChEBI" id="CHEBI:57856"/>
        <dbReference type="ChEBI" id="CHEBI:59789"/>
        <dbReference type="ChEBI" id="CHEBI:64573"/>
        <dbReference type="ChEBI" id="CHEBI:64612"/>
        <dbReference type="EC" id="2.1.1.17"/>
    </reaction>
</comment>
<comment type="pathway">
    <text evidence="1">Phospholipid metabolism; phosphatidylcholine biosynthesis.</text>
</comment>
<comment type="subcellular location">
    <subcellularLocation>
        <location evidence="1">Endoplasmic reticulum membrane</location>
        <topology evidence="1">Multi-pass membrane protein</topology>
    </subcellularLocation>
</comment>
<comment type="similarity">
    <text evidence="1">Belongs to the class VI-like SAM-binding methyltransferase superfamily. CHO2 family.</text>
</comment>
<dbReference type="EC" id="2.1.1.17" evidence="1"/>
<dbReference type="EMBL" id="CABT02000016">
    <property type="protein sequence ID" value="CCC11081.1"/>
    <property type="molecule type" value="Genomic_DNA"/>
</dbReference>
<dbReference type="RefSeq" id="XP_003347690.1">
    <property type="nucleotide sequence ID" value="XM_003347642.1"/>
</dbReference>
<dbReference type="SMR" id="D1ZIW5"/>
<dbReference type="FunCoup" id="D1ZIW5">
    <property type="interactions" value="59"/>
</dbReference>
<dbReference type="STRING" id="771870.D1ZIW5"/>
<dbReference type="GeneID" id="10805125"/>
<dbReference type="KEGG" id="smp:10805125"/>
<dbReference type="VEuPathDB" id="FungiDB:SMAC_03788"/>
<dbReference type="eggNOG" id="ENOG502QRGH">
    <property type="taxonomic scope" value="Eukaryota"/>
</dbReference>
<dbReference type="HOGENOM" id="CLU_005987_0_0_1"/>
<dbReference type="InParanoid" id="D1ZIW5"/>
<dbReference type="OMA" id="RIWYSVG"/>
<dbReference type="OrthoDB" id="4583at2759"/>
<dbReference type="UniPathway" id="UPA00753"/>
<dbReference type="Proteomes" id="UP000001881">
    <property type="component" value="Unassembled WGS sequence"/>
</dbReference>
<dbReference type="GO" id="GO:0032541">
    <property type="term" value="C:cortical endoplasmic reticulum"/>
    <property type="evidence" value="ECO:0007669"/>
    <property type="project" value="EnsemblFungi"/>
</dbReference>
<dbReference type="GO" id="GO:0005789">
    <property type="term" value="C:endoplasmic reticulum membrane"/>
    <property type="evidence" value="ECO:0007669"/>
    <property type="project" value="UniProtKB-SubCell"/>
</dbReference>
<dbReference type="GO" id="GO:0097038">
    <property type="term" value="C:perinuclear endoplasmic reticulum"/>
    <property type="evidence" value="ECO:0007669"/>
    <property type="project" value="EnsemblFungi"/>
</dbReference>
<dbReference type="GO" id="GO:0004608">
    <property type="term" value="F:phosphatidylethanolamine N-methyltransferase activity"/>
    <property type="evidence" value="ECO:0007669"/>
    <property type="project" value="UniProtKB-UniRule"/>
</dbReference>
<dbReference type="GO" id="GO:0032259">
    <property type="term" value="P:methylation"/>
    <property type="evidence" value="ECO:0007669"/>
    <property type="project" value="UniProtKB-KW"/>
</dbReference>
<dbReference type="GO" id="GO:0006656">
    <property type="term" value="P:phosphatidylcholine biosynthetic process"/>
    <property type="evidence" value="ECO:0007669"/>
    <property type="project" value="UniProtKB-UniRule"/>
</dbReference>
<dbReference type="FunFam" id="2.60.40.2840:FF:000006">
    <property type="entry name" value="Phosphatidylethanolamine N-methyltransferase"/>
    <property type="match status" value="1"/>
</dbReference>
<dbReference type="Gene3D" id="2.60.40.2840">
    <property type="match status" value="1"/>
</dbReference>
<dbReference type="HAMAP" id="MF_03217">
    <property type="entry name" value="PEMT"/>
    <property type="match status" value="1"/>
</dbReference>
<dbReference type="InterPro" id="IPR007318">
    <property type="entry name" value="Phopholipid_MeTrfase"/>
</dbReference>
<dbReference type="InterPro" id="IPR016219">
    <property type="entry name" value="Phosphatid-EA_MeTrfase_fun"/>
</dbReference>
<dbReference type="PANTHER" id="PTHR32138">
    <property type="entry name" value="PHOSPHATIDYLETHANOLAMINE N-METHYLTRANSFERASE"/>
    <property type="match status" value="1"/>
</dbReference>
<dbReference type="PANTHER" id="PTHR32138:SF0">
    <property type="entry name" value="PHOSPHATIDYLETHANOLAMINE N-METHYLTRANSFERASE"/>
    <property type="match status" value="1"/>
</dbReference>
<dbReference type="Pfam" id="PF04191">
    <property type="entry name" value="PEMT"/>
    <property type="match status" value="2"/>
</dbReference>
<dbReference type="PIRSF" id="PIRSF000383">
    <property type="entry name" value="PEAMT"/>
    <property type="match status" value="1"/>
</dbReference>
<dbReference type="PROSITE" id="PS51598">
    <property type="entry name" value="SAM_CHO2"/>
    <property type="match status" value="1"/>
</dbReference>
<evidence type="ECO:0000255" key="1">
    <source>
        <dbReference type="HAMAP-Rule" id="MF_03217"/>
    </source>
</evidence>
<evidence type="ECO:0000256" key="2">
    <source>
        <dbReference type="SAM" id="MobiDB-lite"/>
    </source>
</evidence>